<proteinExistence type="inferred from homology"/>
<accession>C5B6Z4</accession>
<keyword id="KW-0997">Cell inner membrane</keyword>
<keyword id="KW-1003">Cell membrane</keyword>
<keyword id="KW-0472">Membrane</keyword>
<keyword id="KW-0812">Transmembrane</keyword>
<keyword id="KW-1133">Transmembrane helix</keyword>
<evidence type="ECO:0000255" key="1">
    <source>
        <dbReference type="HAMAP-Rule" id="MF_01048"/>
    </source>
</evidence>
<organism>
    <name type="scientific">Edwardsiella ictaluri (strain 93-146)</name>
    <dbReference type="NCBI Taxonomy" id="634503"/>
    <lineage>
        <taxon>Bacteria</taxon>
        <taxon>Pseudomonadati</taxon>
        <taxon>Pseudomonadota</taxon>
        <taxon>Gammaproteobacteria</taxon>
        <taxon>Enterobacterales</taxon>
        <taxon>Hafniaceae</taxon>
        <taxon>Edwardsiella</taxon>
    </lineage>
</organism>
<sequence length="135" mass="15402">MPGTERANRVATVLQWILNIGLMALAAILVIFLAKETFTLAGVLFDANQNASTYMLVEGIVIYFLYFEFIALIVKYFQSGYHFPLRYFIYIGITAIIRLIIVDHESPNDTLIYSFAILVLVIALYLANTDRLKRE</sequence>
<name>PSIE_EDWI9</name>
<gene>
    <name evidence="1" type="primary">psiE</name>
    <name type="ordered locus">NT01EI_0213</name>
</gene>
<feature type="chain" id="PRO_1000213426" description="Protein PsiE homolog">
    <location>
        <begin position="1"/>
        <end position="135"/>
    </location>
</feature>
<feature type="transmembrane region" description="Helical" evidence="1">
    <location>
        <begin position="13"/>
        <end position="33"/>
    </location>
</feature>
<feature type="transmembrane region" description="Helical" evidence="1">
    <location>
        <begin position="54"/>
        <end position="74"/>
    </location>
</feature>
<feature type="transmembrane region" description="Helical" evidence="1">
    <location>
        <begin position="82"/>
        <end position="102"/>
    </location>
</feature>
<feature type="transmembrane region" description="Helical" evidence="1">
    <location>
        <begin position="107"/>
        <end position="127"/>
    </location>
</feature>
<reference key="1">
    <citation type="submission" date="2009-03" db="EMBL/GenBank/DDBJ databases">
        <title>Complete genome sequence of Edwardsiella ictaluri 93-146.</title>
        <authorList>
            <person name="Williams M.L."/>
            <person name="Gillaspy A.F."/>
            <person name="Dyer D.W."/>
            <person name="Thune R.L."/>
            <person name="Waldbieser G.C."/>
            <person name="Schuster S.C."/>
            <person name="Gipson J."/>
            <person name="Zaitshik J."/>
            <person name="Landry C."/>
            <person name="Lawrence M.L."/>
        </authorList>
    </citation>
    <scope>NUCLEOTIDE SEQUENCE [LARGE SCALE GENOMIC DNA]</scope>
    <source>
        <strain>93-146</strain>
    </source>
</reference>
<dbReference type="EMBL" id="CP001600">
    <property type="protein sequence ID" value="ACR67456.1"/>
    <property type="molecule type" value="Genomic_DNA"/>
</dbReference>
<dbReference type="RefSeq" id="WP_012847085.1">
    <property type="nucleotide sequence ID" value="NZ_CP169062.1"/>
</dbReference>
<dbReference type="SMR" id="C5B6Z4"/>
<dbReference type="STRING" id="67780.B6E78_12200"/>
<dbReference type="GeneID" id="72527109"/>
<dbReference type="KEGG" id="eic:NT01EI_0213"/>
<dbReference type="HOGENOM" id="CLU_127561_0_0_6"/>
<dbReference type="OrthoDB" id="9792470at2"/>
<dbReference type="Proteomes" id="UP000001485">
    <property type="component" value="Chromosome"/>
</dbReference>
<dbReference type="GO" id="GO:0005886">
    <property type="term" value="C:plasma membrane"/>
    <property type="evidence" value="ECO:0007669"/>
    <property type="project" value="UniProtKB-SubCell"/>
</dbReference>
<dbReference type="GO" id="GO:0016036">
    <property type="term" value="P:cellular response to phosphate starvation"/>
    <property type="evidence" value="ECO:0007669"/>
    <property type="project" value="InterPro"/>
</dbReference>
<dbReference type="HAMAP" id="MF_01048">
    <property type="entry name" value="PsiE"/>
    <property type="match status" value="1"/>
</dbReference>
<dbReference type="InterPro" id="IPR009315">
    <property type="entry name" value="P_starv_induced_PsiE"/>
</dbReference>
<dbReference type="InterPro" id="IPR020948">
    <property type="entry name" value="P_starv_induced_PsiE-like"/>
</dbReference>
<dbReference type="NCBIfam" id="NF002764">
    <property type="entry name" value="PRK02833.1-2"/>
    <property type="match status" value="1"/>
</dbReference>
<dbReference type="NCBIfam" id="NF002765">
    <property type="entry name" value="PRK02833.1-3"/>
    <property type="match status" value="1"/>
</dbReference>
<dbReference type="PANTHER" id="PTHR37819">
    <property type="entry name" value="PROTEIN PSIE"/>
    <property type="match status" value="1"/>
</dbReference>
<dbReference type="PANTHER" id="PTHR37819:SF1">
    <property type="entry name" value="PROTEIN PSIE"/>
    <property type="match status" value="1"/>
</dbReference>
<dbReference type="Pfam" id="PF06146">
    <property type="entry name" value="PsiE"/>
    <property type="match status" value="1"/>
</dbReference>
<dbReference type="PIRSF" id="PIRSF029598">
    <property type="entry name" value="PsiE"/>
    <property type="match status" value="1"/>
</dbReference>
<protein>
    <recommendedName>
        <fullName evidence="1">Protein PsiE homolog</fullName>
    </recommendedName>
</protein>
<comment type="subcellular location">
    <subcellularLocation>
        <location evidence="1">Cell inner membrane</location>
        <topology evidence="1">Multi-pass membrane protein</topology>
    </subcellularLocation>
</comment>
<comment type="similarity">
    <text evidence="1">Belongs to the PsiE family.</text>
</comment>